<sequence length="96" mass="11455">MEKNKHCFYVVECSDGSYYAGYTNHIEKRIGTHNSGRGAKYTRARLPVVLKYVEFHEDKRTAMQAEYYFKQLNRKQKEEYMQKGERYVATKKLSTK</sequence>
<proteinExistence type="inferred from homology"/>
<protein>
    <recommendedName>
        <fullName>UPF0213 protein BT9727_0031</fullName>
    </recommendedName>
</protein>
<gene>
    <name type="ordered locus">BT9727_0031</name>
</gene>
<accession>Q6HPY1</accession>
<comment type="similarity">
    <text evidence="2">Belongs to the UPF0213 family.</text>
</comment>
<name>Y031_BACHK</name>
<organism>
    <name type="scientific">Bacillus thuringiensis subsp. konkukian (strain 97-27)</name>
    <dbReference type="NCBI Taxonomy" id="281309"/>
    <lineage>
        <taxon>Bacteria</taxon>
        <taxon>Bacillati</taxon>
        <taxon>Bacillota</taxon>
        <taxon>Bacilli</taxon>
        <taxon>Bacillales</taxon>
        <taxon>Bacillaceae</taxon>
        <taxon>Bacillus</taxon>
        <taxon>Bacillus cereus group</taxon>
    </lineage>
</organism>
<reference key="1">
    <citation type="journal article" date="2006" name="J. Bacteriol.">
        <title>Pathogenomic sequence analysis of Bacillus cereus and Bacillus thuringiensis isolates closely related to Bacillus anthracis.</title>
        <authorList>
            <person name="Han C.S."/>
            <person name="Xie G."/>
            <person name="Challacombe J.F."/>
            <person name="Altherr M.R."/>
            <person name="Bhotika S.S."/>
            <person name="Bruce D."/>
            <person name="Campbell C.S."/>
            <person name="Campbell M.L."/>
            <person name="Chen J."/>
            <person name="Chertkov O."/>
            <person name="Cleland C."/>
            <person name="Dimitrijevic M."/>
            <person name="Doggett N.A."/>
            <person name="Fawcett J.J."/>
            <person name="Glavina T."/>
            <person name="Goodwin L.A."/>
            <person name="Hill K.K."/>
            <person name="Hitchcock P."/>
            <person name="Jackson P.J."/>
            <person name="Keim P."/>
            <person name="Kewalramani A.R."/>
            <person name="Longmire J."/>
            <person name="Lucas S."/>
            <person name="Malfatti S."/>
            <person name="McMurry K."/>
            <person name="Meincke L.J."/>
            <person name="Misra M."/>
            <person name="Moseman B.L."/>
            <person name="Mundt M."/>
            <person name="Munk A.C."/>
            <person name="Okinaka R.T."/>
            <person name="Parson-Quintana B."/>
            <person name="Reilly L.P."/>
            <person name="Richardson P."/>
            <person name="Robinson D.L."/>
            <person name="Rubin E."/>
            <person name="Saunders E."/>
            <person name="Tapia R."/>
            <person name="Tesmer J.G."/>
            <person name="Thayer N."/>
            <person name="Thompson L.S."/>
            <person name="Tice H."/>
            <person name="Ticknor L.O."/>
            <person name="Wills P.L."/>
            <person name="Brettin T.S."/>
            <person name="Gilna P."/>
        </authorList>
    </citation>
    <scope>NUCLEOTIDE SEQUENCE [LARGE SCALE GENOMIC DNA]</scope>
    <source>
        <strain>97-27</strain>
    </source>
</reference>
<evidence type="ECO:0000255" key="1">
    <source>
        <dbReference type="PROSITE-ProRule" id="PRU00977"/>
    </source>
</evidence>
<evidence type="ECO:0000305" key="2"/>
<feature type="chain" id="PRO_0000161353" description="UPF0213 protein BT9727_0031">
    <location>
        <begin position="1"/>
        <end position="96"/>
    </location>
</feature>
<feature type="domain" description="GIY-YIG" evidence="1">
    <location>
        <begin position="4"/>
        <end position="79"/>
    </location>
</feature>
<dbReference type="EMBL" id="AE017355">
    <property type="protein sequence ID" value="AAT58899.1"/>
    <property type="molecule type" value="Genomic_DNA"/>
</dbReference>
<dbReference type="RefSeq" id="WP_000414342.1">
    <property type="nucleotide sequence ID" value="NC_005957.1"/>
</dbReference>
<dbReference type="RefSeq" id="YP_034389.1">
    <property type="nucleotide sequence ID" value="NC_005957.1"/>
</dbReference>
<dbReference type="SMR" id="Q6HPY1"/>
<dbReference type="KEGG" id="btk:BT9727_0031"/>
<dbReference type="PATRIC" id="fig|281309.8.peg.32"/>
<dbReference type="HOGENOM" id="CLU_135650_0_3_9"/>
<dbReference type="Proteomes" id="UP000001301">
    <property type="component" value="Chromosome"/>
</dbReference>
<dbReference type="CDD" id="cd10456">
    <property type="entry name" value="GIY-YIG_UPF0213"/>
    <property type="match status" value="1"/>
</dbReference>
<dbReference type="Gene3D" id="3.40.1440.10">
    <property type="entry name" value="GIY-YIG endonuclease"/>
    <property type="match status" value="1"/>
</dbReference>
<dbReference type="InterPro" id="IPR000305">
    <property type="entry name" value="GIY-YIG_endonuc"/>
</dbReference>
<dbReference type="InterPro" id="IPR035901">
    <property type="entry name" value="GIY-YIG_endonuc_sf"/>
</dbReference>
<dbReference type="InterPro" id="IPR050190">
    <property type="entry name" value="UPF0213_domain"/>
</dbReference>
<dbReference type="PANTHER" id="PTHR34477">
    <property type="entry name" value="UPF0213 PROTEIN YHBQ"/>
    <property type="match status" value="1"/>
</dbReference>
<dbReference type="PANTHER" id="PTHR34477:SF1">
    <property type="entry name" value="UPF0213 PROTEIN YHBQ"/>
    <property type="match status" value="1"/>
</dbReference>
<dbReference type="Pfam" id="PF01541">
    <property type="entry name" value="GIY-YIG"/>
    <property type="match status" value="1"/>
</dbReference>
<dbReference type="SUPFAM" id="SSF82771">
    <property type="entry name" value="GIY-YIG endonuclease"/>
    <property type="match status" value="1"/>
</dbReference>
<dbReference type="PROSITE" id="PS50164">
    <property type="entry name" value="GIY_YIG"/>
    <property type="match status" value="1"/>
</dbReference>